<protein>
    <recommendedName>
        <fullName>S-adenosylmethionine synthase</fullName>
        <shortName>AdoMet synthase</shortName>
        <ecNumber evidence="3">2.5.1.6</ecNumber>
    </recommendedName>
    <alternativeName>
        <fullName>Methionine adenosyltransferase</fullName>
        <shortName>MAT</shortName>
    </alternativeName>
</protein>
<proteinExistence type="evidence at transcript level"/>
<accession>Q95032</accession>
<name>METK_ACACA</name>
<comment type="function">
    <text evidence="3">Catalyzes the formation of S-adenosylmethionine from methionine and ATP. The reaction comprises two steps that are both catalyzed by the same enzyme: formation of S-adenosylmethionine (AdoMet) and triphosphate, and subsequent hydrolysis of the triphosphate.</text>
</comment>
<comment type="catalytic activity">
    <reaction evidence="3">
        <text>L-methionine + ATP + H2O = S-adenosyl-L-methionine + phosphate + diphosphate</text>
        <dbReference type="Rhea" id="RHEA:21080"/>
        <dbReference type="ChEBI" id="CHEBI:15377"/>
        <dbReference type="ChEBI" id="CHEBI:30616"/>
        <dbReference type="ChEBI" id="CHEBI:33019"/>
        <dbReference type="ChEBI" id="CHEBI:43474"/>
        <dbReference type="ChEBI" id="CHEBI:57844"/>
        <dbReference type="ChEBI" id="CHEBI:59789"/>
        <dbReference type="EC" id="2.5.1.6"/>
    </reaction>
</comment>
<comment type="cofactor">
    <cofactor evidence="2">
        <name>Mg(2+)</name>
        <dbReference type="ChEBI" id="CHEBI:18420"/>
    </cofactor>
    <text evidence="2">Binds 2 magnesium ions per subunit. The magnesium ions interact primarily with the substrate.</text>
</comment>
<comment type="cofactor">
    <cofactor evidence="2">
        <name>K(+)</name>
        <dbReference type="ChEBI" id="CHEBI:29103"/>
    </cofactor>
    <text evidence="2">Binds 1 potassium ion per subunit. The potassium ion interacts primarily with the substrate.</text>
</comment>
<comment type="pathway">
    <text evidence="3">Amino-acid biosynthesis; S-adenosyl-L-methionine biosynthesis; S-adenosyl-L-methionine from L-methionine: step 1/1.</text>
</comment>
<comment type="similarity">
    <text evidence="4">Belongs to the AdoMet synthase family.</text>
</comment>
<gene>
    <name type="primary">metK</name>
    <name type="synonym">sams</name>
</gene>
<feature type="chain" id="PRO_0000174440" description="S-adenosylmethionine synthase">
    <location>
        <begin position="1"/>
        <end position="388"/>
    </location>
</feature>
<feature type="binding site" evidence="2">
    <location>
        <position position="12"/>
    </location>
    <ligand>
        <name>Mg(2+)</name>
        <dbReference type="ChEBI" id="CHEBI:18420"/>
    </ligand>
</feature>
<feature type="binding site" description="in other chain" evidence="3">
    <location>
        <position position="18"/>
    </location>
    <ligand>
        <name>ATP</name>
        <dbReference type="ChEBI" id="CHEBI:30616"/>
        <note>ligand shared between two neighboring subunits</note>
    </ligand>
</feature>
<feature type="binding site" evidence="1">
    <location>
        <position position="46"/>
    </location>
    <ligand>
        <name>K(+)</name>
        <dbReference type="ChEBI" id="CHEBI:29103"/>
    </ligand>
</feature>
<feature type="binding site" evidence="1">
    <location>
        <position position="59"/>
    </location>
    <ligand>
        <name>L-methionine</name>
        <dbReference type="ChEBI" id="CHEBI:57844"/>
    </ligand>
</feature>
<feature type="binding site" evidence="1">
    <location>
        <position position="102"/>
    </location>
    <ligand>
        <name>L-methionine</name>
        <dbReference type="ChEBI" id="CHEBI:57844"/>
    </ligand>
</feature>
<feature type="binding site" description="in other chain" evidence="3">
    <location>
        <begin position="168"/>
        <end position="170"/>
    </location>
    <ligand>
        <name>ATP</name>
        <dbReference type="ChEBI" id="CHEBI:30616"/>
        <note>ligand shared between two neighboring subunits</note>
    </ligand>
</feature>
<feature type="binding site" description="in other chain" evidence="3">
    <location>
        <begin position="236"/>
        <end position="239"/>
    </location>
    <ligand>
        <name>ATP</name>
        <dbReference type="ChEBI" id="CHEBI:30616"/>
        <note>ligand shared between two neighboring subunits</note>
    </ligand>
</feature>
<feature type="binding site" description="in other chain" evidence="1">
    <location>
        <begin position="253"/>
        <end position="254"/>
    </location>
    <ligand>
        <name>ATP</name>
        <dbReference type="ChEBI" id="CHEBI:30616"/>
        <note>ligand shared between two neighboring subunits</note>
    </ligand>
</feature>
<feature type="binding site" evidence="1">
    <location>
        <position position="270"/>
    </location>
    <ligand>
        <name>ATP</name>
        <dbReference type="ChEBI" id="CHEBI:30616"/>
        <note>ligand shared between two neighboring subunits</note>
    </ligand>
</feature>
<feature type="binding site" evidence="1">
    <location>
        <position position="274"/>
    </location>
    <ligand>
        <name>ATP</name>
        <dbReference type="ChEBI" id="CHEBI:30616"/>
        <note>ligand shared between two neighboring subunits</note>
    </ligand>
</feature>
<feature type="binding site" evidence="2">
    <location>
        <position position="278"/>
    </location>
    <ligand>
        <name>ATP</name>
        <dbReference type="ChEBI" id="CHEBI:30616"/>
        <note>ligand shared between two neighboring subunits</note>
    </ligand>
</feature>
<feature type="binding site" evidence="1">
    <location>
        <position position="278"/>
    </location>
    <ligand>
        <name>L-methionine</name>
        <dbReference type="ChEBI" id="CHEBI:57844"/>
    </ligand>
</feature>
<sequence length="388" mass="42617">MASSKTLLFTSECVSESHPDKLCDQVSDAILDACLANDPYSKVACETASKTGMVMVFGEITTKSSFDYQKVIRETVKRIGFTDSSIGFDYKTCNILVAIEQQSPDIAQGVHVGRSDDDLGAGDQGHMFGHATNETPEFMPMTHVLATRLCQRMTEVRNNSILSWMRPDAKTQVTVEYRNENGTLIPLRRHTVVISVQHSEDVTNEEIRKRLMEEVIKPSIPAHLLDGETIFHLNPSGRFVIGGPQGEAGLTGGKIIIDTYGGWGAHGGGAFSGKDPSKVDRSAAYAARWIAKSLVARGLANRALVQVSYAIGVSHPLSVFVDSYGTAQGGRTDEDLLAISKSNFDLRPGKIINDLQLRRPIYEKTAYHGHFGRNDPDFLWEAPKKLNF</sequence>
<evidence type="ECO:0000250" key="1">
    <source>
        <dbReference type="UniProtKB" id="P0A817"/>
    </source>
</evidence>
<evidence type="ECO:0000250" key="2">
    <source>
        <dbReference type="UniProtKB" id="P13444"/>
    </source>
</evidence>
<evidence type="ECO:0000250" key="3">
    <source>
        <dbReference type="UniProtKB" id="Q00266"/>
    </source>
</evidence>
<evidence type="ECO:0000305" key="4"/>
<keyword id="KW-0067">ATP-binding</keyword>
<keyword id="KW-0460">Magnesium</keyword>
<keyword id="KW-0479">Metal-binding</keyword>
<keyword id="KW-0547">Nucleotide-binding</keyword>
<keyword id="KW-0554">One-carbon metabolism</keyword>
<keyword id="KW-0630">Potassium</keyword>
<keyword id="KW-0808">Transferase</keyword>
<dbReference type="EC" id="2.5.1.6" evidence="3"/>
<dbReference type="EMBL" id="X79205">
    <property type="protein sequence ID" value="CAA55794.1"/>
    <property type="molecule type" value="mRNA"/>
</dbReference>
<dbReference type="SMR" id="Q95032"/>
<dbReference type="VEuPathDB" id="AmoebaDB:ACA1_091670"/>
<dbReference type="UniPathway" id="UPA00315">
    <property type="reaction ID" value="UER00080"/>
</dbReference>
<dbReference type="GO" id="GO:0005524">
    <property type="term" value="F:ATP binding"/>
    <property type="evidence" value="ECO:0007669"/>
    <property type="project" value="UniProtKB-KW"/>
</dbReference>
<dbReference type="GO" id="GO:0046872">
    <property type="term" value="F:metal ion binding"/>
    <property type="evidence" value="ECO:0007669"/>
    <property type="project" value="UniProtKB-KW"/>
</dbReference>
<dbReference type="GO" id="GO:0004478">
    <property type="term" value="F:methionine adenosyltransferase activity"/>
    <property type="evidence" value="ECO:0007669"/>
    <property type="project" value="UniProtKB-EC"/>
</dbReference>
<dbReference type="GO" id="GO:0006730">
    <property type="term" value="P:one-carbon metabolic process"/>
    <property type="evidence" value="ECO:0007669"/>
    <property type="project" value="UniProtKB-KW"/>
</dbReference>
<dbReference type="GO" id="GO:0006556">
    <property type="term" value="P:S-adenosylmethionine biosynthetic process"/>
    <property type="evidence" value="ECO:0007669"/>
    <property type="project" value="UniProtKB-UniPathway"/>
</dbReference>
<dbReference type="CDD" id="cd18079">
    <property type="entry name" value="S-AdoMet_synt"/>
    <property type="match status" value="1"/>
</dbReference>
<dbReference type="FunFam" id="3.30.300.10:FF:000001">
    <property type="entry name" value="S-adenosylmethionine synthase"/>
    <property type="match status" value="1"/>
</dbReference>
<dbReference type="FunFam" id="3.30.300.10:FF:000003">
    <property type="entry name" value="S-adenosylmethionine synthase"/>
    <property type="match status" value="1"/>
</dbReference>
<dbReference type="FunFam" id="3.30.300.10:FF:000004">
    <property type="entry name" value="S-adenosylmethionine synthase"/>
    <property type="match status" value="1"/>
</dbReference>
<dbReference type="Gene3D" id="3.30.300.10">
    <property type="match status" value="3"/>
</dbReference>
<dbReference type="HAMAP" id="MF_00086">
    <property type="entry name" value="S_AdoMet_synth1"/>
    <property type="match status" value="1"/>
</dbReference>
<dbReference type="InterPro" id="IPR022631">
    <property type="entry name" value="ADOMET_SYNTHASE_CS"/>
</dbReference>
<dbReference type="InterPro" id="IPR022630">
    <property type="entry name" value="S-AdoMet_synt_C"/>
</dbReference>
<dbReference type="InterPro" id="IPR022629">
    <property type="entry name" value="S-AdoMet_synt_central"/>
</dbReference>
<dbReference type="InterPro" id="IPR022628">
    <property type="entry name" value="S-AdoMet_synt_N"/>
</dbReference>
<dbReference type="InterPro" id="IPR002133">
    <property type="entry name" value="S-AdoMet_synthetase"/>
</dbReference>
<dbReference type="InterPro" id="IPR022636">
    <property type="entry name" value="S-AdoMet_synthetase_sfam"/>
</dbReference>
<dbReference type="NCBIfam" id="TIGR01034">
    <property type="entry name" value="metK"/>
    <property type="match status" value="1"/>
</dbReference>
<dbReference type="PANTHER" id="PTHR11964">
    <property type="entry name" value="S-ADENOSYLMETHIONINE SYNTHETASE"/>
    <property type="match status" value="1"/>
</dbReference>
<dbReference type="Pfam" id="PF02773">
    <property type="entry name" value="S-AdoMet_synt_C"/>
    <property type="match status" value="1"/>
</dbReference>
<dbReference type="Pfam" id="PF02772">
    <property type="entry name" value="S-AdoMet_synt_M"/>
    <property type="match status" value="1"/>
</dbReference>
<dbReference type="Pfam" id="PF00438">
    <property type="entry name" value="S-AdoMet_synt_N"/>
    <property type="match status" value="1"/>
</dbReference>
<dbReference type="PIRSF" id="PIRSF000497">
    <property type="entry name" value="MAT"/>
    <property type="match status" value="1"/>
</dbReference>
<dbReference type="SUPFAM" id="SSF55973">
    <property type="entry name" value="S-adenosylmethionine synthetase"/>
    <property type="match status" value="3"/>
</dbReference>
<dbReference type="PROSITE" id="PS00376">
    <property type="entry name" value="ADOMET_SYNTHASE_1"/>
    <property type="match status" value="1"/>
</dbReference>
<dbReference type="PROSITE" id="PS00377">
    <property type="entry name" value="ADOMET_SYNTHASE_2"/>
    <property type="match status" value="1"/>
</dbReference>
<organism>
    <name type="scientific">Acanthamoeba castellanii</name>
    <name type="common">Amoeba</name>
    <dbReference type="NCBI Taxonomy" id="5755"/>
    <lineage>
        <taxon>Eukaryota</taxon>
        <taxon>Amoebozoa</taxon>
        <taxon>Discosea</taxon>
        <taxon>Longamoebia</taxon>
        <taxon>Centramoebida</taxon>
        <taxon>Acanthamoebidae</taxon>
        <taxon>Acanthamoeba</taxon>
    </lineage>
</organism>
<reference key="1">
    <citation type="journal article" date="1997" name="Biochim. Biophys. Acta">
        <title>Nucleotide sequence and developmental expression of Acanthamoeba S-adenosylmethionine synthetase gene.</title>
        <authorList>
            <person name="Ahn K.S."/>
            <person name="Henney H.R. Jr."/>
        </authorList>
    </citation>
    <scope>NUCLEOTIDE SEQUENCE [MRNA]</scope>
</reference>